<feature type="chain" id="PRO_1000064035" description="2,3-bisphosphoglycerate-dependent phosphoglycerate mutase">
    <location>
        <begin position="1"/>
        <end position="207"/>
    </location>
</feature>
<feature type="active site" description="Tele-phosphohistidine intermediate" evidence="1">
    <location>
        <position position="11"/>
    </location>
</feature>
<feature type="active site" description="Proton donor/acceptor" evidence="1">
    <location>
        <position position="89"/>
    </location>
</feature>
<feature type="binding site" evidence="1">
    <location>
        <begin position="10"/>
        <end position="17"/>
    </location>
    <ligand>
        <name>substrate</name>
    </ligand>
</feature>
<feature type="binding site" evidence="1">
    <location>
        <begin position="23"/>
        <end position="24"/>
    </location>
    <ligand>
        <name>substrate</name>
    </ligand>
</feature>
<feature type="binding site" evidence="1">
    <location>
        <position position="62"/>
    </location>
    <ligand>
        <name>substrate</name>
    </ligand>
</feature>
<feature type="binding site" evidence="1">
    <location>
        <begin position="89"/>
        <end position="92"/>
    </location>
    <ligand>
        <name>substrate</name>
    </ligand>
</feature>
<feature type="binding site" evidence="1">
    <location>
        <position position="100"/>
    </location>
    <ligand>
        <name>substrate</name>
    </ligand>
</feature>
<feature type="binding site" evidence="1">
    <location>
        <begin position="116"/>
        <end position="117"/>
    </location>
    <ligand>
        <name>substrate</name>
    </ligand>
</feature>
<feature type="binding site" evidence="1">
    <location>
        <begin position="160"/>
        <end position="161"/>
    </location>
    <ligand>
        <name>substrate</name>
    </ligand>
</feature>
<feature type="site" description="Transition state stabilizer" evidence="1">
    <location>
        <position position="159"/>
    </location>
</feature>
<keyword id="KW-0312">Gluconeogenesis</keyword>
<keyword id="KW-0324">Glycolysis</keyword>
<keyword id="KW-0413">Isomerase</keyword>
<keyword id="KW-1185">Reference proteome</keyword>
<organism>
    <name type="scientific">Bradyrhizobium sp. (strain ORS 278)</name>
    <dbReference type="NCBI Taxonomy" id="114615"/>
    <lineage>
        <taxon>Bacteria</taxon>
        <taxon>Pseudomonadati</taxon>
        <taxon>Pseudomonadota</taxon>
        <taxon>Alphaproteobacteria</taxon>
        <taxon>Hyphomicrobiales</taxon>
        <taxon>Nitrobacteraceae</taxon>
        <taxon>Bradyrhizobium</taxon>
    </lineage>
</organism>
<name>GPMA_BRASO</name>
<sequence>MSERLLVLVRHGQSEWNLKNLFTGWKDPDLTAQGVSEAKDAGRKLKAHGLSFDVAFTSELTRAQHTLKLILDELGQPGLPTSKNLALNERDYGDLSGLNKDDARAKWGEEQVHVWRRSYDVPPPGGESLKDTLARALPYYVQEILPGVLNGQRTLVAAHGNSLRALIMVLEKLTPEGILKRELATGVPIIYRLKADSTVESKLDLAG</sequence>
<accession>A4YJP8</accession>
<proteinExistence type="inferred from homology"/>
<protein>
    <recommendedName>
        <fullName evidence="1">2,3-bisphosphoglycerate-dependent phosphoglycerate mutase</fullName>
        <shortName evidence="1">BPG-dependent PGAM</shortName>
        <shortName evidence="1">PGAM</shortName>
        <shortName evidence="1">Phosphoglyceromutase</shortName>
        <shortName evidence="1">dPGM</shortName>
        <ecNumber evidence="1">5.4.2.11</ecNumber>
    </recommendedName>
</protein>
<evidence type="ECO:0000255" key="1">
    <source>
        <dbReference type="HAMAP-Rule" id="MF_01039"/>
    </source>
</evidence>
<dbReference type="EC" id="5.4.2.11" evidence="1"/>
<dbReference type="EMBL" id="CU234118">
    <property type="protein sequence ID" value="CAL74124.1"/>
    <property type="molecule type" value="Genomic_DNA"/>
</dbReference>
<dbReference type="RefSeq" id="WP_006613257.1">
    <property type="nucleotide sequence ID" value="NC_009445.1"/>
</dbReference>
<dbReference type="SMR" id="A4YJP8"/>
<dbReference type="STRING" id="114615.BRADO0157"/>
<dbReference type="KEGG" id="bra:BRADO0157"/>
<dbReference type="eggNOG" id="COG0588">
    <property type="taxonomic scope" value="Bacteria"/>
</dbReference>
<dbReference type="HOGENOM" id="CLU_033323_1_4_5"/>
<dbReference type="OrthoDB" id="9781415at2"/>
<dbReference type="UniPathway" id="UPA00109">
    <property type="reaction ID" value="UER00186"/>
</dbReference>
<dbReference type="Proteomes" id="UP000001994">
    <property type="component" value="Chromosome"/>
</dbReference>
<dbReference type="GO" id="GO:0004619">
    <property type="term" value="F:phosphoglycerate mutase activity"/>
    <property type="evidence" value="ECO:0007669"/>
    <property type="project" value="UniProtKB-EC"/>
</dbReference>
<dbReference type="GO" id="GO:0006094">
    <property type="term" value="P:gluconeogenesis"/>
    <property type="evidence" value="ECO:0007669"/>
    <property type="project" value="UniProtKB-UniRule"/>
</dbReference>
<dbReference type="GO" id="GO:0006096">
    <property type="term" value="P:glycolytic process"/>
    <property type="evidence" value="ECO:0007669"/>
    <property type="project" value="UniProtKB-UniRule"/>
</dbReference>
<dbReference type="CDD" id="cd07067">
    <property type="entry name" value="HP_PGM_like"/>
    <property type="match status" value="1"/>
</dbReference>
<dbReference type="Gene3D" id="3.40.50.1240">
    <property type="entry name" value="Phosphoglycerate mutase-like"/>
    <property type="match status" value="1"/>
</dbReference>
<dbReference type="HAMAP" id="MF_01039">
    <property type="entry name" value="PGAM_GpmA"/>
    <property type="match status" value="1"/>
</dbReference>
<dbReference type="InterPro" id="IPR013078">
    <property type="entry name" value="His_Pase_superF_clade-1"/>
</dbReference>
<dbReference type="InterPro" id="IPR029033">
    <property type="entry name" value="His_PPase_superfam"/>
</dbReference>
<dbReference type="InterPro" id="IPR001345">
    <property type="entry name" value="PG/BPGM_mutase_AS"/>
</dbReference>
<dbReference type="InterPro" id="IPR005952">
    <property type="entry name" value="Phosphogly_mut1"/>
</dbReference>
<dbReference type="NCBIfam" id="TIGR01258">
    <property type="entry name" value="pgm_1"/>
    <property type="match status" value="1"/>
</dbReference>
<dbReference type="NCBIfam" id="NF002339">
    <property type="entry name" value="PRK01295.1"/>
    <property type="match status" value="1"/>
</dbReference>
<dbReference type="PANTHER" id="PTHR11931">
    <property type="entry name" value="PHOSPHOGLYCERATE MUTASE"/>
    <property type="match status" value="1"/>
</dbReference>
<dbReference type="Pfam" id="PF00300">
    <property type="entry name" value="His_Phos_1"/>
    <property type="match status" value="1"/>
</dbReference>
<dbReference type="SMART" id="SM00855">
    <property type="entry name" value="PGAM"/>
    <property type="match status" value="1"/>
</dbReference>
<dbReference type="SUPFAM" id="SSF53254">
    <property type="entry name" value="Phosphoglycerate mutase-like"/>
    <property type="match status" value="1"/>
</dbReference>
<dbReference type="PROSITE" id="PS00175">
    <property type="entry name" value="PG_MUTASE"/>
    <property type="match status" value="1"/>
</dbReference>
<comment type="function">
    <text evidence="1">Catalyzes the interconversion of 2-phosphoglycerate and 3-phosphoglycerate.</text>
</comment>
<comment type="catalytic activity">
    <reaction evidence="1">
        <text>(2R)-2-phosphoglycerate = (2R)-3-phosphoglycerate</text>
        <dbReference type="Rhea" id="RHEA:15901"/>
        <dbReference type="ChEBI" id="CHEBI:58272"/>
        <dbReference type="ChEBI" id="CHEBI:58289"/>
        <dbReference type="EC" id="5.4.2.11"/>
    </reaction>
</comment>
<comment type="pathway">
    <text evidence="1">Carbohydrate degradation; glycolysis; pyruvate from D-glyceraldehyde 3-phosphate: step 3/5.</text>
</comment>
<comment type="subunit">
    <text evidence="1">Homodimer.</text>
</comment>
<comment type="similarity">
    <text evidence="1">Belongs to the phosphoglycerate mutase family. BPG-dependent PGAM subfamily.</text>
</comment>
<gene>
    <name evidence="1" type="primary">gpmA</name>
    <name type="ordered locus">BRADO0157</name>
</gene>
<reference key="1">
    <citation type="journal article" date="2007" name="Science">
        <title>Legumes symbioses: absence of nod genes in photosynthetic bradyrhizobia.</title>
        <authorList>
            <person name="Giraud E."/>
            <person name="Moulin L."/>
            <person name="Vallenet D."/>
            <person name="Barbe V."/>
            <person name="Cytryn E."/>
            <person name="Avarre J.-C."/>
            <person name="Jaubert M."/>
            <person name="Simon D."/>
            <person name="Cartieaux F."/>
            <person name="Prin Y."/>
            <person name="Bena G."/>
            <person name="Hannibal L."/>
            <person name="Fardoux J."/>
            <person name="Kojadinovic M."/>
            <person name="Vuillet L."/>
            <person name="Lajus A."/>
            <person name="Cruveiller S."/>
            <person name="Rouy Z."/>
            <person name="Mangenot S."/>
            <person name="Segurens B."/>
            <person name="Dossat C."/>
            <person name="Franck W.L."/>
            <person name="Chang W.-S."/>
            <person name="Saunders E."/>
            <person name="Bruce D."/>
            <person name="Richardson P."/>
            <person name="Normand P."/>
            <person name="Dreyfus B."/>
            <person name="Pignol D."/>
            <person name="Stacey G."/>
            <person name="Emerich D."/>
            <person name="Vermeglio A."/>
            <person name="Medigue C."/>
            <person name="Sadowsky M."/>
        </authorList>
    </citation>
    <scope>NUCLEOTIDE SEQUENCE [LARGE SCALE GENOMIC DNA]</scope>
    <source>
        <strain>ORS 278</strain>
    </source>
</reference>